<dbReference type="EMBL" id="CP000569">
    <property type="protein sequence ID" value="ABN74696.1"/>
    <property type="molecule type" value="Genomic_DNA"/>
</dbReference>
<dbReference type="RefSeq" id="WP_009874590.1">
    <property type="nucleotide sequence ID" value="NC_009053.1"/>
</dbReference>
<dbReference type="SMR" id="A3N2R0"/>
<dbReference type="STRING" id="416269.APL_1612"/>
<dbReference type="EnsemblBacteria" id="ABN74696">
    <property type="protein sequence ID" value="ABN74696"/>
    <property type="gene ID" value="APL_1612"/>
</dbReference>
<dbReference type="GeneID" id="92743733"/>
<dbReference type="KEGG" id="apl:APL_1612"/>
<dbReference type="eggNOG" id="COG0378">
    <property type="taxonomic scope" value="Bacteria"/>
</dbReference>
<dbReference type="HOGENOM" id="CLU_072144_1_0_6"/>
<dbReference type="Proteomes" id="UP000001432">
    <property type="component" value="Chromosome"/>
</dbReference>
<dbReference type="GO" id="GO:0005737">
    <property type="term" value="C:cytoplasm"/>
    <property type="evidence" value="ECO:0007669"/>
    <property type="project" value="UniProtKB-SubCell"/>
</dbReference>
<dbReference type="GO" id="GO:0005525">
    <property type="term" value="F:GTP binding"/>
    <property type="evidence" value="ECO:0007669"/>
    <property type="project" value="UniProtKB-KW"/>
</dbReference>
<dbReference type="GO" id="GO:0003924">
    <property type="term" value="F:GTPase activity"/>
    <property type="evidence" value="ECO:0007669"/>
    <property type="project" value="InterPro"/>
</dbReference>
<dbReference type="GO" id="GO:0016151">
    <property type="term" value="F:nickel cation binding"/>
    <property type="evidence" value="ECO:0007669"/>
    <property type="project" value="UniProtKB-UniRule"/>
</dbReference>
<dbReference type="GO" id="GO:0043419">
    <property type="term" value="P:urea catabolic process"/>
    <property type="evidence" value="ECO:0007669"/>
    <property type="project" value="InterPro"/>
</dbReference>
<dbReference type="CDD" id="cd05540">
    <property type="entry name" value="UreG"/>
    <property type="match status" value="1"/>
</dbReference>
<dbReference type="FunFam" id="3.40.50.300:FF:000208">
    <property type="entry name" value="Urease accessory protein UreG"/>
    <property type="match status" value="1"/>
</dbReference>
<dbReference type="Gene3D" id="3.40.50.300">
    <property type="entry name" value="P-loop containing nucleotide triphosphate hydrolases"/>
    <property type="match status" value="1"/>
</dbReference>
<dbReference type="HAMAP" id="MF_01389">
    <property type="entry name" value="UreG"/>
    <property type="match status" value="1"/>
</dbReference>
<dbReference type="InterPro" id="IPR003495">
    <property type="entry name" value="CobW/HypB/UreG_nucleotide-bd"/>
</dbReference>
<dbReference type="InterPro" id="IPR027417">
    <property type="entry name" value="P-loop_NTPase"/>
</dbReference>
<dbReference type="InterPro" id="IPR004400">
    <property type="entry name" value="UreG"/>
</dbReference>
<dbReference type="NCBIfam" id="TIGR00101">
    <property type="entry name" value="ureG"/>
    <property type="match status" value="1"/>
</dbReference>
<dbReference type="PANTHER" id="PTHR31715">
    <property type="entry name" value="UREASE ACCESSORY PROTEIN G"/>
    <property type="match status" value="1"/>
</dbReference>
<dbReference type="PANTHER" id="PTHR31715:SF0">
    <property type="entry name" value="UREASE ACCESSORY PROTEIN G"/>
    <property type="match status" value="1"/>
</dbReference>
<dbReference type="Pfam" id="PF02492">
    <property type="entry name" value="cobW"/>
    <property type="match status" value="1"/>
</dbReference>
<dbReference type="PIRSF" id="PIRSF005624">
    <property type="entry name" value="Ni-bind_GTPase"/>
    <property type="match status" value="1"/>
</dbReference>
<dbReference type="SUPFAM" id="SSF52540">
    <property type="entry name" value="P-loop containing nucleoside triphosphate hydrolases"/>
    <property type="match status" value="1"/>
</dbReference>
<comment type="function">
    <text evidence="1">Facilitates the functional incorporation of the urease nickel metallocenter. This process requires GTP hydrolysis, probably effectuated by UreG.</text>
</comment>
<comment type="subunit">
    <text evidence="1">Homodimer. UreD, UreF and UreG form a complex that acts as a GTP-hydrolysis-dependent molecular chaperone, activating the urease apoprotein by helping to assemble the nickel containing metallocenter of UreC. The UreE protein probably delivers the nickel.</text>
</comment>
<comment type="subcellular location">
    <subcellularLocation>
        <location evidence="1">Cytoplasm</location>
    </subcellularLocation>
</comment>
<comment type="similarity">
    <text evidence="1">Belongs to the SIMIBI class G3E GTPase family. UreG subfamily.</text>
</comment>
<accession>A3N2R0</accession>
<feature type="chain" id="PRO_1000145160" description="Urease accessory protein UreG">
    <location>
        <begin position="1"/>
        <end position="211"/>
    </location>
</feature>
<feature type="binding site" evidence="1">
    <location>
        <begin position="11"/>
        <end position="18"/>
    </location>
    <ligand>
        <name>GTP</name>
        <dbReference type="ChEBI" id="CHEBI:37565"/>
    </ligand>
</feature>
<gene>
    <name evidence="1" type="primary">ureG</name>
    <name type="ordered locus">APL_1612</name>
</gene>
<organism>
    <name type="scientific">Actinobacillus pleuropneumoniae serotype 5b (strain L20)</name>
    <dbReference type="NCBI Taxonomy" id="416269"/>
    <lineage>
        <taxon>Bacteria</taxon>
        <taxon>Pseudomonadati</taxon>
        <taxon>Pseudomonadota</taxon>
        <taxon>Gammaproteobacteria</taxon>
        <taxon>Pasteurellales</taxon>
        <taxon>Pasteurellaceae</taxon>
        <taxon>Actinobacillus</taxon>
    </lineage>
</organism>
<name>UREG_ACTP2</name>
<sequence length="211" mass="23140">MRKYIKIGVAGPVGAGKTALIERLTREIASKYSVAVITNDIYTQEDAEFLTKNSLLPPERIMGVETGGCPHTAIREDASMNLEAVDEMVARFPEVELIFIESGGDNLSATFSPDLADVTIFVIDVAQGEKIPRKGGPGITRSDLLVINKTDLAPFVGADLSVMERDARRMRNGQPFIFTNLMKNENLDGVIGWIEKYALLKNIEDPASLVR</sequence>
<keyword id="KW-0143">Chaperone</keyword>
<keyword id="KW-0963">Cytoplasm</keyword>
<keyword id="KW-0342">GTP-binding</keyword>
<keyword id="KW-0996">Nickel insertion</keyword>
<keyword id="KW-0547">Nucleotide-binding</keyword>
<keyword id="KW-1185">Reference proteome</keyword>
<proteinExistence type="inferred from homology"/>
<reference key="1">
    <citation type="journal article" date="2008" name="J. Bacteriol.">
        <title>The complete genome sequence of Actinobacillus pleuropneumoniae L20 (serotype 5b).</title>
        <authorList>
            <person name="Foote S.J."/>
            <person name="Bosse J.T."/>
            <person name="Bouevitch A.B."/>
            <person name="Langford P.R."/>
            <person name="Young N.M."/>
            <person name="Nash J.H.E."/>
        </authorList>
    </citation>
    <scope>NUCLEOTIDE SEQUENCE [LARGE SCALE GENOMIC DNA]</scope>
    <source>
        <strain>L20</strain>
    </source>
</reference>
<protein>
    <recommendedName>
        <fullName evidence="1">Urease accessory protein UreG</fullName>
    </recommendedName>
</protein>
<evidence type="ECO:0000255" key="1">
    <source>
        <dbReference type="HAMAP-Rule" id="MF_01389"/>
    </source>
</evidence>